<proteinExistence type="inferred from homology"/>
<accession>Q6DAV4</accession>
<keyword id="KW-0227">DNA damage</keyword>
<keyword id="KW-0234">DNA repair</keyword>
<keyword id="KW-0238">DNA-binding</keyword>
<keyword id="KW-0326">Glycosidase</keyword>
<keyword id="KW-0378">Hydrolase</keyword>
<keyword id="KW-0456">Lyase</keyword>
<keyword id="KW-0479">Metal-binding</keyword>
<keyword id="KW-0511">Multifunctional enzyme</keyword>
<keyword id="KW-1185">Reference proteome</keyword>
<keyword id="KW-0862">Zinc</keyword>
<keyword id="KW-0863">Zinc-finger</keyword>
<dbReference type="EC" id="3.2.2.23" evidence="2"/>
<dbReference type="EC" id="4.2.99.18" evidence="2"/>
<dbReference type="EMBL" id="BX950851">
    <property type="protein sequence ID" value="CAG73068.1"/>
    <property type="molecule type" value="Genomic_DNA"/>
</dbReference>
<dbReference type="RefSeq" id="WP_011091788.1">
    <property type="nucleotide sequence ID" value="NC_004547.2"/>
</dbReference>
<dbReference type="SMR" id="Q6DAV4"/>
<dbReference type="STRING" id="218491.ECA0148"/>
<dbReference type="GeneID" id="57207007"/>
<dbReference type="KEGG" id="eca:ECA0148"/>
<dbReference type="PATRIC" id="fig|218491.5.peg.150"/>
<dbReference type="eggNOG" id="COG0266">
    <property type="taxonomic scope" value="Bacteria"/>
</dbReference>
<dbReference type="HOGENOM" id="CLU_038423_1_1_6"/>
<dbReference type="OrthoDB" id="9800855at2"/>
<dbReference type="Proteomes" id="UP000007966">
    <property type="component" value="Chromosome"/>
</dbReference>
<dbReference type="GO" id="GO:0034039">
    <property type="term" value="F:8-oxo-7,8-dihydroguanine DNA N-glycosylase activity"/>
    <property type="evidence" value="ECO:0007669"/>
    <property type="project" value="TreeGrafter"/>
</dbReference>
<dbReference type="GO" id="GO:0140078">
    <property type="term" value="F:class I DNA-(apurinic or apyrimidinic site) endonuclease activity"/>
    <property type="evidence" value="ECO:0007669"/>
    <property type="project" value="UniProtKB-EC"/>
</dbReference>
<dbReference type="GO" id="GO:0003684">
    <property type="term" value="F:damaged DNA binding"/>
    <property type="evidence" value="ECO:0007669"/>
    <property type="project" value="InterPro"/>
</dbReference>
<dbReference type="GO" id="GO:0008270">
    <property type="term" value="F:zinc ion binding"/>
    <property type="evidence" value="ECO:0007669"/>
    <property type="project" value="UniProtKB-UniRule"/>
</dbReference>
<dbReference type="GO" id="GO:0006284">
    <property type="term" value="P:base-excision repair"/>
    <property type="evidence" value="ECO:0007669"/>
    <property type="project" value="InterPro"/>
</dbReference>
<dbReference type="CDD" id="cd08966">
    <property type="entry name" value="EcFpg-like_N"/>
    <property type="match status" value="1"/>
</dbReference>
<dbReference type="FunFam" id="1.10.8.50:FF:000003">
    <property type="entry name" value="Formamidopyrimidine-DNA glycosylase"/>
    <property type="match status" value="1"/>
</dbReference>
<dbReference type="FunFam" id="3.20.190.10:FF:000001">
    <property type="entry name" value="Formamidopyrimidine-DNA glycosylase"/>
    <property type="match status" value="1"/>
</dbReference>
<dbReference type="Gene3D" id="1.10.8.50">
    <property type="match status" value="1"/>
</dbReference>
<dbReference type="Gene3D" id="3.20.190.10">
    <property type="entry name" value="MutM-like, N-terminal"/>
    <property type="match status" value="1"/>
</dbReference>
<dbReference type="HAMAP" id="MF_00103">
    <property type="entry name" value="Fapy_DNA_glycosyl"/>
    <property type="match status" value="1"/>
</dbReference>
<dbReference type="InterPro" id="IPR015886">
    <property type="entry name" value="DNA_glyclase/AP_lyase_DNA-bd"/>
</dbReference>
<dbReference type="InterPro" id="IPR015887">
    <property type="entry name" value="DNA_glyclase_Znf_dom_DNA_BS"/>
</dbReference>
<dbReference type="InterPro" id="IPR020629">
    <property type="entry name" value="Formamido-pyr_DNA_Glyclase"/>
</dbReference>
<dbReference type="InterPro" id="IPR012319">
    <property type="entry name" value="FPG_cat"/>
</dbReference>
<dbReference type="InterPro" id="IPR035937">
    <property type="entry name" value="MutM-like_N-ter"/>
</dbReference>
<dbReference type="InterPro" id="IPR010979">
    <property type="entry name" value="Ribosomal_uS13-like_H2TH"/>
</dbReference>
<dbReference type="InterPro" id="IPR000214">
    <property type="entry name" value="Znf_DNA_glyclase/AP_lyase"/>
</dbReference>
<dbReference type="InterPro" id="IPR010663">
    <property type="entry name" value="Znf_FPG/IleRS"/>
</dbReference>
<dbReference type="NCBIfam" id="TIGR00577">
    <property type="entry name" value="fpg"/>
    <property type="match status" value="1"/>
</dbReference>
<dbReference type="NCBIfam" id="NF002211">
    <property type="entry name" value="PRK01103.1"/>
    <property type="match status" value="1"/>
</dbReference>
<dbReference type="PANTHER" id="PTHR22993">
    <property type="entry name" value="FORMAMIDOPYRIMIDINE-DNA GLYCOSYLASE"/>
    <property type="match status" value="1"/>
</dbReference>
<dbReference type="PANTHER" id="PTHR22993:SF9">
    <property type="entry name" value="FORMAMIDOPYRIMIDINE-DNA GLYCOSYLASE"/>
    <property type="match status" value="1"/>
</dbReference>
<dbReference type="Pfam" id="PF01149">
    <property type="entry name" value="Fapy_DNA_glyco"/>
    <property type="match status" value="1"/>
</dbReference>
<dbReference type="Pfam" id="PF06831">
    <property type="entry name" value="H2TH"/>
    <property type="match status" value="1"/>
</dbReference>
<dbReference type="Pfam" id="PF06827">
    <property type="entry name" value="zf-FPG_IleRS"/>
    <property type="match status" value="1"/>
</dbReference>
<dbReference type="SMART" id="SM00898">
    <property type="entry name" value="Fapy_DNA_glyco"/>
    <property type="match status" value="1"/>
</dbReference>
<dbReference type="SMART" id="SM01232">
    <property type="entry name" value="H2TH"/>
    <property type="match status" value="1"/>
</dbReference>
<dbReference type="SUPFAM" id="SSF57716">
    <property type="entry name" value="Glucocorticoid receptor-like (DNA-binding domain)"/>
    <property type="match status" value="1"/>
</dbReference>
<dbReference type="SUPFAM" id="SSF81624">
    <property type="entry name" value="N-terminal domain of MutM-like DNA repair proteins"/>
    <property type="match status" value="1"/>
</dbReference>
<dbReference type="SUPFAM" id="SSF46946">
    <property type="entry name" value="S13-like H2TH domain"/>
    <property type="match status" value="1"/>
</dbReference>
<dbReference type="PROSITE" id="PS51068">
    <property type="entry name" value="FPG_CAT"/>
    <property type="match status" value="1"/>
</dbReference>
<dbReference type="PROSITE" id="PS01242">
    <property type="entry name" value="ZF_FPG_1"/>
    <property type="match status" value="1"/>
</dbReference>
<dbReference type="PROSITE" id="PS51066">
    <property type="entry name" value="ZF_FPG_2"/>
    <property type="match status" value="1"/>
</dbReference>
<comment type="function">
    <text evidence="2">Involved in base excision repair of DNA damaged by oxidation or by mutagenic agents. Acts as a DNA glycosylase that recognizes and removes damaged bases. Has a preference for oxidized purines, such as 7,8-dihydro-8-oxoguanine (8-oxoG). Has AP (apurinic/apyrimidinic) lyase activity and introduces nicks in the DNA strand. Cleaves the DNA backbone by beta-delta elimination to generate a single-strand break at the site of the removed base with both 3'- and 5'-phosphates.</text>
</comment>
<comment type="catalytic activity">
    <reaction evidence="2">
        <text>Hydrolysis of DNA containing ring-opened 7-methylguanine residues, releasing 2,6-diamino-4-hydroxy-5-(N-methyl)formamidopyrimidine.</text>
        <dbReference type="EC" id="3.2.2.23"/>
    </reaction>
</comment>
<comment type="catalytic activity">
    <reaction evidence="2">
        <text>2'-deoxyribonucleotide-(2'-deoxyribose 5'-phosphate)-2'-deoxyribonucleotide-DNA = a 3'-end 2'-deoxyribonucleotide-(2,3-dehydro-2,3-deoxyribose 5'-phosphate)-DNA + a 5'-end 5'-phospho-2'-deoxyribonucleoside-DNA + H(+)</text>
        <dbReference type="Rhea" id="RHEA:66592"/>
        <dbReference type="Rhea" id="RHEA-COMP:13180"/>
        <dbReference type="Rhea" id="RHEA-COMP:16897"/>
        <dbReference type="Rhea" id="RHEA-COMP:17067"/>
        <dbReference type="ChEBI" id="CHEBI:15378"/>
        <dbReference type="ChEBI" id="CHEBI:136412"/>
        <dbReference type="ChEBI" id="CHEBI:157695"/>
        <dbReference type="ChEBI" id="CHEBI:167181"/>
        <dbReference type="EC" id="4.2.99.18"/>
    </reaction>
</comment>
<comment type="cofactor">
    <cofactor evidence="2">
        <name>Zn(2+)</name>
        <dbReference type="ChEBI" id="CHEBI:29105"/>
    </cofactor>
    <text evidence="2">Binds 1 zinc ion per subunit.</text>
</comment>
<comment type="subunit">
    <text evidence="2">Monomer.</text>
</comment>
<comment type="similarity">
    <text evidence="2">Belongs to the FPG family.</text>
</comment>
<protein>
    <recommendedName>
        <fullName evidence="2">Formamidopyrimidine-DNA glycosylase</fullName>
        <shortName evidence="2">Fapy-DNA glycosylase</shortName>
        <ecNumber evidence="2">3.2.2.23</ecNumber>
    </recommendedName>
    <alternativeName>
        <fullName evidence="2">DNA-(apurinic or apyrimidinic site) lyase MutM</fullName>
        <shortName evidence="2">AP lyase MutM</shortName>
        <ecNumber evidence="2">4.2.99.18</ecNumber>
    </alternativeName>
</protein>
<name>FPG_PECAS</name>
<sequence>MPELPEVETSRRGISPYLVGHTILYAEVRNARLRWPVSAEILSLSDEPVLSVRRRAKYLLIELTHGWIIVHLGMSGSLRILPEYSEPEKHDHVDLVMDSGKVLRYTDPRRFGAWLWTDSLETSSVLAHLGPEPLEAEFFADYLYQASRGKKTAIKQWIMDNKVVVGVGNIYASESLFAAGIHPDRAAGSLNENDADVLVRVIKQVLQLSIEQGGTTLRDFLQSDGKPGYFAQELRVYGRNGEPCRTCGTPIETAKHGQRSTFFCRRCQV</sequence>
<evidence type="ECO:0000250" key="1"/>
<evidence type="ECO:0000255" key="2">
    <source>
        <dbReference type="HAMAP-Rule" id="MF_00103"/>
    </source>
</evidence>
<feature type="initiator methionine" description="Removed" evidence="1">
    <location>
        <position position="1"/>
    </location>
</feature>
<feature type="chain" id="PRO_0000228432" description="Formamidopyrimidine-DNA glycosylase">
    <location>
        <begin position="2"/>
        <end position="269"/>
    </location>
</feature>
<feature type="zinc finger region" description="FPG-type" evidence="2">
    <location>
        <begin position="235"/>
        <end position="269"/>
    </location>
</feature>
<feature type="active site" description="Schiff-base intermediate with DNA" evidence="2">
    <location>
        <position position="2"/>
    </location>
</feature>
<feature type="active site" description="Proton donor" evidence="2">
    <location>
        <position position="3"/>
    </location>
</feature>
<feature type="active site" description="Proton donor; for beta-elimination activity" evidence="2">
    <location>
        <position position="57"/>
    </location>
</feature>
<feature type="active site" description="Proton donor; for delta-elimination activity" evidence="2">
    <location>
        <position position="259"/>
    </location>
</feature>
<feature type="binding site" evidence="2">
    <location>
        <position position="90"/>
    </location>
    <ligand>
        <name>DNA</name>
        <dbReference type="ChEBI" id="CHEBI:16991"/>
    </ligand>
</feature>
<feature type="binding site" evidence="2">
    <location>
        <position position="109"/>
    </location>
    <ligand>
        <name>DNA</name>
        <dbReference type="ChEBI" id="CHEBI:16991"/>
    </ligand>
</feature>
<feature type="binding site" evidence="2">
    <location>
        <position position="150"/>
    </location>
    <ligand>
        <name>DNA</name>
        <dbReference type="ChEBI" id="CHEBI:16991"/>
    </ligand>
</feature>
<reference key="1">
    <citation type="journal article" date="2004" name="Proc. Natl. Acad. Sci. U.S.A.">
        <title>Genome sequence of the enterobacterial phytopathogen Erwinia carotovora subsp. atroseptica and characterization of virulence factors.</title>
        <authorList>
            <person name="Bell K.S."/>
            <person name="Sebaihia M."/>
            <person name="Pritchard L."/>
            <person name="Holden M.T.G."/>
            <person name="Hyman L.J."/>
            <person name="Holeva M.C."/>
            <person name="Thomson N.R."/>
            <person name="Bentley S.D."/>
            <person name="Churcher L.J.C."/>
            <person name="Mungall K."/>
            <person name="Atkin R."/>
            <person name="Bason N."/>
            <person name="Brooks K."/>
            <person name="Chillingworth T."/>
            <person name="Clark K."/>
            <person name="Doggett J."/>
            <person name="Fraser A."/>
            <person name="Hance Z."/>
            <person name="Hauser H."/>
            <person name="Jagels K."/>
            <person name="Moule S."/>
            <person name="Norbertczak H."/>
            <person name="Ormond D."/>
            <person name="Price C."/>
            <person name="Quail M.A."/>
            <person name="Sanders M."/>
            <person name="Walker D."/>
            <person name="Whitehead S."/>
            <person name="Salmond G.P.C."/>
            <person name="Birch P.R.J."/>
            <person name="Parkhill J."/>
            <person name="Toth I.K."/>
        </authorList>
    </citation>
    <scope>NUCLEOTIDE SEQUENCE [LARGE SCALE GENOMIC DNA]</scope>
    <source>
        <strain>SCRI 1043 / ATCC BAA-672</strain>
    </source>
</reference>
<gene>
    <name evidence="2" type="primary">mutM</name>
    <name evidence="2" type="synonym">fpg</name>
    <name type="ordered locus">ECA0148</name>
</gene>
<organism>
    <name type="scientific">Pectobacterium atrosepticum (strain SCRI 1043 / ATCC BAA-672)</name>
    <name type="common">Erwinia carotovora subsp. atroseptica</name>
    <dbReference type="NCBI Taxonomy" id="218491"/>
    <lineage>
        <taxon>Bacteria</taxon>
        <taxon>Pseudomonadati</taxon>
        <taxon>Pseudomonadota</taxon>
        <taxon>Gammaproteobacteria</taxon>
        <taxon>Enterobacterales</taxon>
        <taxon>Pectobacteriaceae</taxon>
        <taxon>Pectobacterium</taxon>
    </lineage>
</organism>